<dbReference type="EMBL" id="DQ347958">
    <property type="protein sequence ID" value="ABC56211.1"/>
    <property type="molecule type" value="Genomic_DNA"/>
</dbReference>
<dbReference type="RefSeq" id="YP_538846.1">
    <property type="nucleotide sequence ID" value="NC_007943.1"/>
</dbReference>
<dbReference type="SMR" id="Q2MII9"/>
<dbReference type="GeneID" id="3989534"/>
<dbReference type="GO" id="GO:0009507">
    <property type="term" value="C:chloroplast"/>
    <property type="evidence" value="ECO:0007669"/>
    <property type="project" value="UniProtKB-SubCell"/>
</dbReference>
<dbReference type="GO" id="GO:0015935">
    <property type="term" value="C:small ribosomal subunit"/>
    <property type="evidence" value="ECO:0007669"/>
    <property type="project" value="TreeGrafter"/>
</dbReference>
<dbReference type="GO" id="GO:0019843">
    <property type="term" value="F:rRNA binding"/>
    <property type="evidence" value="ECO:0007669"/>
    <property type="project" value="UniProtKB-UniRule"/>
</dbReference>
<dbReference type="GO" id="GO:0003735">
    <property type="term" value="F:structural constituent of ribosome"/>
    <property type="evidence" value="ECO:0007669"/>
    <property type="project" value="InterPro"/>
</dbReference>
<dbReference type="GO" id="GO:0006412">
    <property type="term" value="P:translation"/>
    <property type="evidence" value="ECO:0007669"/>
    <property type="project" value="UniProtKB-UniRule"/>
</dbReference>
<dbReference type="FunFam" id="1.10.287.1480:FF:000001">
    <property type="entry name" value="30S ribosomal protein S14"/>
    <property type="match status" value="1"/>
</dbReference>
<dbReference type="Gene3D" id="1.10.287.1480">
    <property type="match status" value="1"/>
</dbReference>
<dbReference type="HAMAP" id="MF_00537">
    <property type="entry name" value="Ribosomal_uS14_1"/>
    <property type="match status" value="1"/>
</dbReference>
<dbReference type="InterPro" id="IPR001209">
    <property type="entry name" value="Ribosomal_uS14"/>
</dbReference>
<dbReference type="InterPro" id="IPR023036">
    <property type="entry name" value="Ribosomal_uS14_bac/plastid"/>
</dbReference>
<dbReference type="InterPro" id="IPR018271">
    <property type="entry name" value="Ribosomal_uS14_CS"/>
</dbReference>
<dbReference type="NCBIfam" id="NF006477">
    <property type="entry name" value="PRK08881.1"/>
    <property type="match status" value="1"/>
</dbReference>
<dbReference type="PANTHER" id="PTHR19836">
    <property type="entry name" value="30S RIBOSOMAL PROTEIN S14"/>
    <property type="match status" value="1"/>
</dbReference>
<dbReference type="PANTHER" id="PTHR19836:SF19">
    <property type="entry name" value="SMALL RIBOSOMAL SUBUNIT PROTEIN US14M"/>
    <property type="match status" value="1"/>
</dbReference>
<dbReference type="Pfam" id="PF00253">
    <property type="entry name" value="Ribosomal_S14"/>
    <property type="match status" value="1"/>
</dbReference>
<dbReference type="SUPFAM" id="SSF57716">
    <property type="entry name" value="Glucocorticoid receptor-like (DNA-binding domain)"/>
    <property type="match status" value="1"/>
</dbReference>
<dbReference type="PROSITE" id="PS00527">
    <property type="entry name" value="RIBOSOMAL_S14"/>
    <property type="match status" value="1"/>
</dbReference>
<gene>
    <name evidence="1" type="primary">rps14</name>
</gene>
<reference key="1">
    <citation type="journal article" date="2006" name="Theor. Appl. Genet.">
        <title>Complete chloroplast genome sequences of Solanum bulbocastanum, Solanum lycopersicum and comparative analyses with other Solanaceae genomes.</title>
        <authorList>
            <person name="Daniell H."/>
            <person name="Lee S.-B."/>
            <person name="Grevich J."/>
            <person name="Saski C."/>
            <person name="Quesada-Vargas T."/>
            <person name="Guda C."/>
            <person name="Tomkins J."/>
            <person name="Jansen R.K."/>
        </authorList>
    </citation>
    <scope>NUCLEOTIDE SEQUENCE [LARGE SCALE GENOMIC DNA]</scope>
    <source>
        <strain>cv. PT29</strain>
    </source>
</reference>
<protein>
    <recommendedName>
        <fullName evidence="1">Small ribosomal subunit protein uS14c</fullName>
    </recommendedName>
    <alternativeName>
        <fullName evidence="3">30S ribosomal protein S14, chloroplastic</fullName>
    </alternativeName>
</protein>
<proteinExistence type="inferred from homology"/>
<feature type="chain" id="PRO_0000276702" description="Small ribosomal subunit protein uS14c">
    <location>
        <begin position="1"/>
        <end position="100"/>
    </location>
</feature>
<feature type="region of interest" description="Disordered" evidence="2">
    <location>
        <begin position="1"/>
        <end position="31"/>
    </location>
</feature>
<sequence length="100" mass="11760">MARKSLIQREKKRQKLEQKYHSIRRSSKKEISKVPSLSDKWEIYGKLQSLPRNSAPTRLHRRCFLTGRPRANYRDFGLSGHILREMVHACLLPGATRSSW</sequence>
<organism>
    <name type="scientific">Solanum bulbocastanum</name>
    <name type="common">Wild potato</name>
    <dbReference type="NCBI Taxonomy" id="147425"/>
    <lineage>
        <taxon>Eukaryota</taxon>
        <taxon>Viridiplantae</taxon>
        <taxon>Streptophyta</taxon>
        <taxon>Embryophyta</taxon>
        <taxon>Tracheophyta</taxon>
        <taxon>Spermatophyta</taxon>
        <taxon>Magnoliopsida</taxon>
        <taxon>eudicotyledons</taxon>
        <taxon>Gunneridae</taxon>
        <taxon>Pentapetalae</taxon>
        <taxon>asterids</taxon>
        <taxon>lamiids</taxon>
        <taxon>Solanales</taxon>
        <taxon>Solanaceae</taxon>
        <taxon>Solanoideae</taxon>
        <taxon>Solaneae</taxon>
        <taxon>Solanum</taxon>
    </lineage>
</organism>
<keyword id="KW-0150">Chloroplast</keyword>
<keyword id="KW-0934">Plastid</keyword>
<keyword id="KW-0687">Ribonucleoprotein</keyword>
<keyword id="KW-0689">Ribosomal protein</keyword>
<keyword id="KW-0694">RNA-binding</keyword>
<keyword id="KW-0699">rRNA-binding</keyword>
<comment type="function">
    <text evidence="1">Binds 16S rRNA, required for the assembly of 30S particles.</text>
</comment>
<comment type="subunit">
    <text evidence="1">Part of the 30S ribosomal subunit.</text>
</comment>
<comment type="subcellular location">
    <subcellularLocation>
        <location>Plastid</location>
        <location>Chloroplast</location>
    </subcellularLocation>
</comment>
<comment type="similarity">
    <text evidence="1">Belongs to the universal ribosomal protein uS14 family.</text>
</comment>
<accession>Q2MII9</accession>
<name>RR14_SOLBU</name>
<geneLocation type="chloroplast"/>
<evidence type="ECO:0000255" key="1">
    <source>
        <dbReference type="HAMAP-Rule" id="MF_00537"/>
    </source>
</evidence>
<evidence type="ECO:0000256" key="2">
    <source>
        <dbReference type="SAM" id="MobiDB-lite"/>
    </source>
</evidence>
<evidence type="ECO:0000305" key="3"/>